<name>HEMH_HELPY</name>
<evidence type="ECO:0000255" key="1">
    <source>
        <dbReference type="HAMAP-Rule" id="MF_00323"/>
    </source>
</evidence>
<evidence type="ECO:0000305" key="2"/>
<sequence>MDLINEKLNNLENNATKSPKEAVILLNMGGPNSLYEVGVFLKNMFDDPFILTIKNNFMRKMVGKMIVNSRIEKSKKIYEKLGGKSPLTPITFALTERLNKLDPSRFYTYAMRYTPPYASMVLQDLALKEVESLVFFSMYPQYSSTTTLSSFNDAFNALKSLETFRPKVRVIERFYASKKLNKIILNTILNTLNNRKSQDFVLIFSVHGLPKSVIDAGDTYQQECEHHVSLLKELMQQKNTPFKEVLLSYQSKLGPMKWLEPSTEELIEKHRKSHIIIYPLAFTIDNSETLYELDMQYRLMAERLAVKEYLVCPCLNDSIEFAQFIIERVKNLKE</sequence>
<keyword id="KW-0963">Cytoplasm</keyword>
<keyword id="KW-0350">Heme biosynthesis</keyword>
<keyword id="KW-0408">Iron</keyword>
<keyword id="KW-0456">Lyase</keyword>
<keyword id="KW-0479">Metal-binding</keyword>
<keyword id="KW-0627">Porphyrin biosynthesis</keyword>
<keyword id="KW-1185">Reference proteome</keyword>
<protein>
    <recommendedName>
        <fullName evidence="1">Ferrochelatase</fullName>
        <ecNumber evidence="1">4.98.1.1</ecNumber>
    </recommendedName>
    <alternativeName>
        <fullName evidence="1">Heme synthase</fullName>
    </alternativeName>
    <alternativeName>
        <fullName evidence="1">Protoheme ferro-lyase</fullName>
    </alternativeName>
</protein>
<dbReference type="EC" id="4.98.1.1" evidence="1"/>
<dbReference type="EMBL" id="AE000511">
    <property type="protein sequence ID" value="AAD07444.1"/>
    <property type="molecule type" value="Genomic_DNA"/>
</dbReference>
<dbReference type="PIR" id="H64566">
    <property type="entry name" value="H64566"/>
</dbReference>
<dbReference type="RefSeq" id="NP_207174.1">
    <property type="nucleotide sequence ID" value="NC_000915.1"/>
</dbReference>
<dbReference type="RefSeq" id="WP_000364269.1">
    <property type="nucleotide sequence ID" value="NC_018939.1"/>
</dbReference>
<dbReference type="SMR" id="P56107"/>
<dbReference type="FunCoup" id="P56107">
    <property type="interactions" value="292"/>
</dbReference>
<dbReference type="IntAct" id="P56107">
    <property type="interactions" value="2"/>
</dbReference>
<dbReference type="STRING" id="85962.HP_0376"/>
<dbReference type="PaxDb" id="85962-C694_01910"/>
<dbReference type="EnsemblBacteria" id="AAD07444">
    <property type="protein sequence ID" value="AAD07444"/>
    <property type="gene ID" value="HP_0376"/>
</dbReference>
<dbReference type="KEGG" id="heo:C694_01910"/>
<dbReference type="KEGG" id="hpy:HP_0376"/>
<dbReference type="PATRIC" id="fig|85962.47.peg.399"/>
<dbReference type="eggNOG" id="COG0276">
    <property type="taxonomic scope" value="Bacteria"/>
</dbReference>
<dbReference type="InParanoid" id="P56107"/>
<dbReference type="OrthoDB" id="9809741at2"/>
<dbReference type="PhylomeDB" id="P56107"/>
<dbReference type="UniPathway" id="UPA00252">
    <property type="reaction ID" value="UER00325"/>
</dbReference>
<dbReference type="Proteomes" id="UP000000429">
    <property type="component" value="Chromosome"/>
</dbReference>
<dbReference type="GO" id="GO:0005737">
    <property type="term" value="C:cytoplasm"/>
    <property type="evidence" value="ECO:0007669"/>
    <property type="project" value="UniProtKB-SubCell"/>
</dbReference>
<dbReference type="GO" id="GO:0004325">
    <property type="term" value="F:ferrochelatase activity"/>
    <property type="evidence" value="ECO:0000318"/>
    <property type="project" value="GO_Central"/>
</dbReference>
<dbReference type="GO" id="GO:0046872">
    <property type="term" value="F:metal ion binding"/>
    <property type="evidence" value="ECO:0007669"/>
    <property type="project" value="UniProtKB-KW"/>
</dbReference>
<dbReference type="GO" id="GO:0006783">
    <property type="term" value="P:heme biosynthetic process"/>
    <property type="evidence" value="ECO:0000318"/>
    <property type="project" value="GO_Central"/>
</dbReference>
<dbReference type="CDD" id="cd00419">
    <property type="entry name" value="Ferrochelatase_C"/>
    <property type="match status" value="1"/>
</dbReference>
<dbReference type="CDD" id="cd03411">
    <property type="entry name" value="Ferrochelatase_N"/>
    <property type="match status" value="1"/>
</dbReference>
<dbReference type="Gene3D" id="3.40.50.1400">
    <property type="match status" value="2"/>
</dbReference>
<dbReference type="HAMAP" id="MF_00323">
    <property type="entry name" value="Ferrochelatase"/>
    <property type="match status" value="1"/>
</dbReference>
<dbReference type="InterPro" id="IPR001015">
    <property type="entry name" value="Ferrochelatase"/>
</dbReference>
<dbReference type="InterPro" id="IPR019772">
    <property type="entry name" value="Ferrochelatase_AS"/>
</dbReference>
<dbReference type="InterPro" id="IPR033644">
    <property type="entry name" value="Ferrochelatase_C"/>
</dbReference>
<dbReference type="InterPro" id="IPR033659">
    <property type="entry name" value="Ferrochelatase_N"/>
</dbReference>
<dbReference type="NCBIfam" id="TIGR00109">
    <property type="entry name" value="hemH"/>
    <property type="match status" value="1"/>
</dbReference>
<dbReference type="PANTHER" id="PTHR11108">
    <property type="entry name" value="FERROCHELATASE"/>
    <property type="match status" value="1"/>
</dbReference>
<dbReference type="PANTHER" id="PTHR11108:SF1">
    <property type="entry name" value="FERROCHELATASE, MITOCHONDRIAL"/>
    <property type="match status" value="1"/>
</dbReference>
<dbReference type="Pfam" id="PF00762">
    <property type="entry name" value="Ferrochelatase"/>
    <property type="match status" value="1"/>
</dbReference>
<dbReference type="SUPFAM" id="SSF53800">
    <property type="entry name" value="Chelatase"/>
    <property type="match status" value="1"/>
</dbReference>
<dbReference type="PROSITE" id="PS00534">
    <property type="entry name" value="FERROCHELATASE"/>
    <property type="match status" value="1"/>
</dbReference>
<organism>
    <name type="scientific">Helicobacter pylori (strain ATCC 700392 / 26695)</name>
    <name type="common">Campylobacter pylori</name>
    <dbReference type="NCBI Taxonomy" id="85962"/>
    <lineage>
        <taxon>Bacteria</taxon>
        <taxon>Pseudomonadati</taxon>
        <taxon>Campylobacterota</taxon>
        <taxon>Epsilonproteobacteria</taxon>
        <taxon>Campylobacterales</taxon>
        <taxon>Helicobacteraceae</taxon>
        <taxon>Helicobacter</taxon>
    </lineage>
</organism>
<reference key="1">
    <citation type="journal article" date="1997" name="Nature">
        <title>The complete genome sequence of the gastric pathogen Helicobacter pylori.</title>
        <authorList>
            <person name="Tomb J.-F."/>
            <person name="White O."/>
            <person name="Kerlavage A.R."/>
            <person name="Clayton R.A."/>
            <person name="Sutton G.G."/>
            <person name="Fleischmann R.D."/>
            <person name="Ketchum K.A."/>
            <person name="Klenk H.-P."/>
            <person name="Gill S.R."/>
            <person name="Dougherty B.A."/>
            <person name="Nelson K.E."/>
            <person name="Quackenbush J."/>
            <person name="Zhou L."/>
            <person name="Kirkness E.F."/>
            <person name="Peterson S.N."/>
            <person name="Loftus B.J."/>
            <person name="Richardson D.L."/>
            <person name="Dodson R.J."/>
            <person name="Khalak H.G."/>
            <person name="Glodek A."/>
            <person name="McKenney K."/>
            <person name="FitzGerald L.M."/>
            <person name="Lee N."/>
            <person name="Adams M.D."/>
            <person name="Hickey E.K."/>
            <person name="Berg D.E."/>
            <person name="Gocayne J.D."/>
            <person name="Utterback T.R."/>
            <person name="Peterson J.D."/>
            <person name="Kelley J.M."/>
            <person name="Cotton M.D."/>
            <person name="Weidman J.F."/>
            <person name="Fujii C."/>
            <person name="Bowman C."/>
            <person name="Watthey L."/>
            <person name="Wallin E."/>
            <person name="Hayes W.S."/>
            <person name="Borodovsky M."/>
            <person name="Karp P.D."/>
            <person name="Smith H.O."/>
            <person name="Fraser C.M."/>
            <person name="Venter J.C."/>
        </authorList>
    </citation>
    <scope>NUCLEOTIDE SEQUENCE [LARGE SCALE GENOMIC DNA]</scope>
    <source>
        <strain>ATCC 700392 / 26695</strain>
    </source>
</reference>
<feature type="chain" id="PRO_0000175149" description="Ferrochelatase">
    <location>
        <begin position="1"/>
        <end position="334"/>
    </location>
</feature>
<feature type="binding site" evidence="1">
    <location>
        <position position="207"/>
    </location>
    <ligand>
        <name>Fe cation</name>
        <dbReference type="ChEBI" id="CHEBI:24875"/>
    </ligand>
</feature>
<feature type="binding site" evidence="1">
    <location>
        <position position="288"/>
    </location>
    <ligand>
        <name>Fe cation</name>
        <dbReference type="ChEBI" id="CHEBI:24875"/>
    </ligand>
</feature>
<proteinExistence type="inferred from homology"/>
<comment type="function">
    <text evidence="1">Catalyzes the ferrous insertion into protoporphyrin IX.</text>
</comment>
<comment type="catalytic activity">
    <reaction evidence="1">
        <text>heme b + 2 H(+) = protoporphyrin IX + Fe(2+)</text>
        <dbReference type="Rhea" id="RHEA:22584"/>
        <dbReference type="ChEBI" id="CHEBI:15378"/>
        <dbReference type="ChEBI" id="CHEBI:29033"/>
        <dbReference type="ChEBI" id="CHEBI:57306"/>
        <dbReference type="ChEBI" id="CHEBI:60344"/>
        <dbReference type="EC" id="4.98.1.1"/>
    </reaction>
</comment>
<comment type="pathway">
    <text evidence="1">Porphyrin-containing compound metabolism; protoheme biosynthesis; protoheme from protoporphyrin-IX: step 1/1.</text>
</comment>
<comment type="subcellular location">
    <subcellularLocation>
        <location evidence="1">Cytoplasm</location>
    </subcellularLocation>
</comment>
<comment type="similarity">
    <text evidence="1 2">Belongs to the ferrochelatase family.</text>
</comment>
<accession>P56107</accession>
<gene>
    <name evidence="1" type="primary">hemH</name>
    <name type="ordered locus">HP_0376</name>
</gene>